<proteinExistence type="inferred from homology"/>
<sequence>MSRKRIRWTLRALRRLDEIGAYIEKDDPDAAARVVARIGTAVDALAEYPASGRPGRIKSTRELVLADIPYIIPYRISRDVEILTVMHAHQQWPQVL</sequence>
<geneLocation type="plasmid">
    <name>sym pNGR234a</name>
</geneLocation>
<name>Y4KP_SINFN</name>
<gene>
    <name type="ordered locus">NGR_a02800</name>
    <name type="ORF">y4kP</name>
</gene>
<reference key="1">
    <citation type="journal article" date="1997" name="Nature">
        <title>Molecular basis of symbiosis between Rhizobium and legumes.</title>
        <authorList>
            <person name="Freiberg C.A."/>
            <person name="Fellay R."/>
            <person name="Bairoch A."/>
            <person name="Broughton W.J."/>
            <person name="Rosenthal A."/>
            <person name="Perret X."/>
        </authorList>
    </citation>
    <scope>NUCLEOTIDE SEQUENCE [LARGE SCALE GENOMIC DNA]</scope>
    <source>
        <strain>NBRC 101917 / NGR234</strain>
    </source>
</reference>
<reference key="2">
    <citation type="journal article" date="2009" name="Appl. Environ. Microbiol.">
        <title>Rhizobium sp. strain NGR234 possesses a remarkable number of secretion systems.</title>
        <authorList>
            <person name="Schmeisser C."/>
            <person name="Liesegang H."/>
            <person name="Krysciak D."/>
            <person name="Bakkou N."/>
            <person name="Le Quere A."/>
            <person name="Wollherr A."/>
            <person name="Heinemeyer I."/>
            <person name="Morgenstern B."/>
            <person name="Pommerening-Roeser A."/>
            <person name="Flores M."/>
            <person name="Palacios R."/>
            <person name="Brenner S."/>
            <person name="Gottschalk G."/>
            <person name="Schmitz R.A."/>
            <person name="Broughton W.J."/>
            <person name="Perret X."/>
            <person name="Strittmatter A.W."/>
            <person name="Streit W.R."/>
        </authorList>
    </citation>
    <scope>NUCLEOTIDE SEQUENCE [LARGE SCALE GENOMIC DNA]</scope>
    <source>
        <strain>NBRC 101917 / NGR234</strain>
    </source>
</reference>
<comment type="function">
    <text evidence="1">Toxic component of a type II toxin-antitoxin (TA) system.</text>
</comment>
<comment type="similarity">
    <text evidence="2">Belongs to the RelE toxin family.</text>
</comment>
<feature type="chain" id="PRO_0000200895" description="Putative toxin Y4kP">
    <location>
        <begin position="1"/>
        <end position="96"/>
    </location>
</feature>
<protein>
    <recommendedName>
        <fullName>Putative toxin Y4kP</fullName>
    </recommendedName>
</protein>
<dbReference type="EMBL" id="U00090">
    <property type="protein sequence ID" value="AAB91747.1"/>
    <property type="molecule type" value="Genomic_DNA"/>
</dbReference>
<dbReference type="PIR" id="T10870">
    <property type="entry name" value="T10870"/>
</dbReference>
<dbReference type="RefSeq" id="NP_443945.1">
    <property type="nucleotide sequence ID" value="NC_000914.2"/>
</dbReference>
<dbReference type="RefSeq" id="WP_010875305.1">
    <property type="nucleotide sequence ID" value="NC_000914.2"/>
</dbReference>
<dbReference type="SMR" id="P55534"/>
<dbReference type="KEGG" id="rhi:NGR_a02800"/>
<dbReference type="PATRIC" id="fig|394.7.peg.298"/>
<dbReference type="eggNOG" id="COG3668">
    <property type="taxonomic scope" value="Bacteria"/>
</dbReference>
<dbReference type="HOGENOM" id="CLU_147162_11_2_5"/>
<dbReference type="OrthoDB" id="595470at2"/>
<dbReference type="Proteomes" id="UP000001054">
    <property type="component" value="Plasmid pNGR234a"/>
</dbReference>
<dbReference type="Gene3D" id="3.30.2310.20">
    <property type="entry name" value="RelE-like"/>
    <property type="match status" value="1"/>
</dbReference>
<dbReference type="InterPro" id="IPR007712">
    <property type="entry name" value="RelE/ParE_toxin"/>
</dbReference>
<dbReference type="InterPro" id="IPR035093">
    <property type="entry name" value="RelE/ParE_toxin_dom_sf"/>
</dbReference>
<dbReference type="InterPro" id="IPR051803">
    <property type="entry name" value="TA_system_RelE-like_toxin"/>
</dbReference>
<dbReference type="NCBIfam" id="TIGR02385">
    <property type="entry name" value="RelE_StbE"/>
    <property type="match status" value="1"/>
</dbReference>
<dbReference type="PANTHER" id="PTHR33755:SF6">
    <property type="entry name" value="PLASMID STABILIZATION SYSTEM PROTEIN"/>
    <property type="match status" value="1"/>
</dbReference>
<dbReference type="PANTHER" id="PTHR33755">
    <property type="entry name" value="TOXIN PARE1-RELATED"/>
    <property type="match status" value="1"/>
</dbReference>
<dbReference type="Pfam" id="PF05016">
    <property type="entry name" value="ParE_toxin"/>
    <property type="match status" value="1"/>
</dbReference>
<accession>P55534</accession>
<organism>
    <name type="scientific">Sinorhizobium fredii (strain NBRC 101917 / NGR234)</name>
    <dbReference type="NCBI Taxonomy" id="394"/>
    <lineage>
        <taxon>Bacteria</taxon>
        <taxon>Pseudomonadati</taxon>
        <taxon>Pseudomonadota</taxon>
        <taxon>Alphaproteobacteria</taxon>
        <taxon>Hyphomicrobiales</taxon>
        <taxon>Rhizobiaceae</taxon>
        <taxon>Sinorhizobium/Ensifer group</taxon>
        <taxon>Sinorhizobium</taxon>
    </lineage>
</organism>
<evidence type="ECO:0000250" key="1"/>
<evidence type="ECO:0000305" key="2"/>
<keyword id="KW-0614">Plasmid</keyword>
<keyword id="KW-1185">Reference proteome</keyword>
<keyword id="KW-1277">Toxin-antitoxin system</keyword>